<sequence length="122" mass="13115">MSSLAQKQVARLKRQTRVRKKITGSPARPRLNVFKSARHIYAQLIDDTTGATLASASTLLGDVAEGLSYTGNIEAATKVGAAIAKKALEKEITAVVFDRNGFLYHGRIKALADAARENGLSF</sequence>
<proteinExistence type="inferred from homology"/>
<reference key="1">
    <citation type="submission" date="2009-07" db="EMBL/GenBank/DDBJ databases">
        <title>Complete sequence of Geobacter sp. M21.</title>
        <authorList>
            <consortium name="US DOE Joint Genome Institute"/>
            <person name="Lucas S."/>
            <person name="Copeland A."/>
            <person name="Lapidus A."/>
            <person name="Glavina del Rio T."/>
            <person name="Dalin E."/>
            <person name="Tice H."/>
            <person name="Bruce D."/>
            <person name="Goodwin L."/>
            <person name="Pitluck S."/>
            <person name="Saunders E."/>
            <person name="Brettin T."/>
            <person name="Detter J.C."/>
            <person name="Han C."/>
            <person name="Larimer F."/>
            <person name="Land M."/>
            <person name="Hauser L."/>
            <person name="Kyrpides N."/>
            <person name="Ovchinnikova G."/>
            <person name="Lovley D."/>
        </authorList>
    </citation>
    <scope>NUCLEOTIDE SEQUENCE [LARGE SCALE GENOMIC DNA]</scope>
    <source>
        <strain>M21</strain>
    </source>
</reference>
<feature type="chain" id="PRO_1000214674" description="Large ribosomal subunit protein uL18">
    <location>
        <begin position="1"/>
        <end position="122"/>
    </location>
</feature>
<evidence type="ECO:0000255" key="1">
    <source>
        <dbReference type="HAMAP-Rule" id="MF_01337"/>
    </source>
</evidence>
<evidence type="ECO:0000305" key="2"/>
<name>RL18_GEOSM</name>
<keyword id="KW-0687">Ribonucleoprotein</keyword>
<keyword id="KW-0689">Ribosomal protein</keyword>
<keyword id="KW-0694">RNA-binding</keyword>
<keyword id="KW-0699">rRNA-binding</keyword>
<gene>
    <name evidence="1" type="primary">rplR</name>
    <name type="ordered locus">GM21_3312</name>
</gene>
<organism>
    <name type="scientific">Geobacter sp. (strain M21)</name>
    <dbReference type="NCBI Taxonomy" id="443144"/>
    <lineage>
        <taxon>Bacteria</taxon>
        <taxon>Pseudomonadati</taxon>
        <taxon>Thermodesulfobacteriota</taxon>
        <taxon>Desulfuromonadia</taxon>
        <taxon>Geobacterales</taxon>
        <taxon>Geobacteraceae</taxon>
        <taxon>Geobacter</taxon>
    </lineage>
</organism>
<dbReference type="EMBL" id="CP001661">
    <property type="protein sequence ID" value="ACT19337.1"/>
    <property type="molecule type" value="Genomic_DNA"/>
</dbReference>
<dbReference type="SMR" id="C6E4P1"/>
<dbReference type="STRING" id="443144.GM21_3312"/>
<dbReference type="KEGG" id="gem:GM21_3312"/>
<dbReference type="eggNOG" id="COG0256">
    <property type="taxonomic scope" value="Bacteria"/>
</dbReference>
<dbReference type="HOGENOM" id="CLU_098841_0_1_7"/>
<dbReference type="OrthoDB" id="9810939at2"/>
<dbReference type="GO" id="GO:0022625">
    <property type="term" value="C:cytosolic large ribosomal subunit"/>
    <property type="evidence" value="ECO:0007669"/>
    <property type="project" value="TreeGrafter"/>
</dbReference>
<dbReference type="GO" id="GO:0008097">
    <property type="term" value="F:5S rRNA binding"/>
    <property type="evidence" value="ECO:0007669"/>
    <property type="project" value="TreeGrafter"/>
</dbReference>
<dbReference type="GO" id="GO:0003735">
    <property type="term" value="F:structural constituent of ribosome"/>
    <property type="evidence" value="ECO:0007669"/>
    <property type="project" value="InterPro"/>
</dbReference>
<dbReference type="GO" id="GO:0006412">
    <property type="term" value="P:translation"/>
    <property type="evidence" value="ECO:0007669"/>
    <property type="project" value="UniProtKB-UniRule"/>
</dbReference>
<dbReference type="CDD" id="cd00432">
    <property type="entry name" value="Ribosomal_L18_L5e"/>
    <property type="match status" value="1"/>
</dbReference>
<dbReference type="FunFam" id="3.30.420.100:FF:000001">
    <property type="entry name" value="50S ribosomal protein L18"/>
    <property type="match status" value="1"/>
</dbReference>
<dbReference type="Gene3D" id="3.30.420.100">
    <property type="match status" value="1"/>
</dbReference>
<dbReference type="HAMAP" id="MF_01337_B">
    <property type="entry name" value="Ribosomal_uL18_B"/>
    <property type="match status" value="1"/>
</dbReference>
<dbReference type="InterPro" id="IPR004389">
    <property type="entry name" value="Ribosomal_uL18_bac-type"/>
</dbReference>
<dbReference type="InterPro" id="IPR005484">
    <property type="entry name" value="Ribosomal_uL18_bac/euk"/>
</dbReference>
<dbReference type="NCBIfam" id="TIGR00060">
    <property type="entry name" value="L18_bact"/>
    <property type="match status" value="1"/>
</dbReference>
<dbReference type="PANTHER" id="PTHR12899">
    <property type="entry name" value="39S RIBOSOMAL PROTEIN L18, MITOCHONDRIAL"/>
    <property type="match status" value="1"/>
</dbReference>
<dbReference type="PANTHER" id="PTHR12899:SF3">
    <property type="entry name" value="LARGE RIBOSOMAL SUBUNIT PROTEIN UL18M"/>
    <property type="match status" value="1"/>
</dbReference>
<dbReference type="Pfam" id="PF00861">
    <property type="entry name" value="Ribosomal_L18p"/>
    <property type="match status" value="1"/>
</dbReference>
<dbReference type="SUPFAM" id="SSF53137">
    <property type="entry name" value="Translational machinery components"/>
    <property type="match status" value="1"/>
</dbReference>
<comment type="function">
    <text evidence="1">This is one of the proteins that bind and probably mediate the attachment of the 5S RNA into the large ribosomal subunit, where it forms part of the central protuberance.</text>
</comment>
<comment type="subunit">
    <text evidence="1">Part of the 50S ribosomal subunit; part of the 5S rRNA/L5/L18/L25 subcomplex. Contacts the 5S and 23S rRNAs.</text>
</comment>
<comment type="similarity">
    <text evidence="1">Belongs to the universal ribosomal protein uL18 family.</text>
</comment>
<accession>C6E4P1</accession>
<protein>
    <recommendedName>
        <fullName evidence="1">Large ribosomal subunit protein uL18</fullName>
    </recommendedName>
    <alternativeName>
        <fullName evidence="2">50S ribosomal protein L18</fullName>
    </alternativeName>
</protein>